<dbReference type="EC" id="3.1.3.5" evidence="1"/>
<dbReference type="EMBL" id="BA000019">
    <property type="protein sequence ID" value="BAB76545.1"/>
    <property type="molecule type" value="Genomic_DNA"/>
</dbReference>
<dbReference type="PIR" id="AF2411">
    <property type="entry name" value="AF2411"/>
</dbReference>
<dbReference type="RefSeq" id="WP_010998974.1">
    <property type="nucleotide sequence ID" value="NZ_RSCN01000037.1"/>
</dbReference>
<dbReference type="SMR" id="Q8YMT3"/>
<dbReference type="STRING" id="103690.gene:10496900"/>
<dbReference type="KEGG" id="ana:alr4846"/>
<dbReference type="eggNOG" id="COG0496">
    <property type="taxonomic scope" value="Bacteria"/>
</dbReference>
<dbReference type="OrthoDB" id="9780815at2"/>
<dbReference type="Proteomes" id="UP000002483">
    <property type="component" value="Chromosome"/>
</dbReference>
<dbReference type="GO" id="GO:0005737">
    <property type="term" value="C:cytoplasm"/>
    <property type="evidence" value="ECO:0007669"/>
    <property type="project" value="UniProtKB-SubCell"/>
</dbReference>
<dbReference type="GO" id="GO:0008254">
    <property type="term" value="F:3'-nucleotidase activity"/>
    <property type="evidence" value="ECO:0007669"/>
    <property type="project" value="TreeGrafter"/>
</dbReference>
<dbReference type="GO" id="GO:0008253">
    <property type="term" value="F:5'-nucleotidase activity"/>
    <property type="evidence" value="ECO:0007669"/>
    <property type="project" value="UniProtKB-UniRule"/>
</dbReference>
<dbReference type="GO" id="GO:0004309">
    <property type="term" value="F:exopolyphosphatase activity"/>
    <property type="evidence" value="ECO:0007669"/>
    <property type="project" value="TreeGrafter"/>
</dbReference>
<dbReference type="GO" id="GO:0046872">
    <property type="term" value="F:metal ion binding"/>
    <property type="evidence" value="ECO:0007669"/>
    <property type="project" value="UniProtKB-UniRule"/>
</dbReference>
<dbReference type="GO" id="GO:0000166">
    <property type="term" value="F:nucleotide binding"/>
    <property type="evidence" value="ECO:0007669"/>
    <property type="project" value="UniProtKB-KW"/>
</dbReference>
<dbReference type="FunFam" id="3.40.1210.10:FF:000001">
    <property type="entry name" value="5'/3'-nucleotidase SurE"/>
    <property type="match status" value="1"/>
</dbReference>
<dbReference type="Gene3D" id="3.40.1210.10">
    <property type="entry name" value="Survival protein SurE-like phosphatase/nucleotidase"/>
    <property type="match status" value="1"/>
</dbReference>
<dbReference type="HAMAP" id="MF_00060">
    <property type="entry name" value="SurE"/>
    <property type="match status" value="1"/>
</dbReference>
<dbReference type="InterPro" id="IPR030048">
    <property type="entry name" value="SurE"/>
</dbReference>
<dbReference type="InterPro" id="IPR002828">
    <property type="entry name" value="SurE-like_Pase/nucleotidase"/>
</dbReference>
<dbReference type="InterPro" id="IPR036523">
    <property type="entry name" value="SurE-like_sf"/>
</dbReference>
<dbReference type="NCBIfam" id="NF001490">
    <property type="entry name" value="PRK00346.1-4"/>
    <property type="match status" value="1"/>
</dbReference>
<dbReference type="NCBIfam" id="NF001492">
    <property type="entry name" value="PRK00346.2-2"/>
    <property type="match status" value="1"/>
</dbReference>
<dbReference type="NCBIfam" id="TIGR00087">
    <property type="entry name" value="surE"/>
    <property type="match status" value="1"/>
</dbReference>
<dbReference type="PANTHER" id="PTHR30457">
    <property type="entry name" value="5'-NUCLEOTIDASE SURE"/>
    <property type="match status" value="1"/>
</dbReference>
<dbReference type="PANTHER" id="PTHR30457:SF12">
    <property type="entry name" value="5'_3'-NUCLEOTIDASE SURE"/>
    <property type="match status" value="1"/>
</dbReference>
<dbReference type="Pfam" id="PF01975">
    <property type="entry name" value="SurE"/>
    <property type="match status" value="1"/>
</dbReference>
<dbReference type="SUPFAM" id="SSF64167">
    <property type="entry name" value="SurE-like"/>
    <property type="match status" value="1"/>
</dbReference>
<feature type="chain" id="PRO_0000111787" description="5'-nucleotidase SurE">
    <location>
        <begin position="1"/>
        <end position="265"/>
    </location>
</feature>
<feature type="binding site" evidence="1">
    <location>
        <position position="8"/>
    </location>
    <ligand>
        <name>a divalent metal cation</name>
        <dbReference type="ChEBI" id="CHEBI:60240"/>
    </ligand>
</feature>
<feature type="binding site" evidence="1">
    <location>
        <position position="9"/>
    </location>
    <ligand>
        <name>a divalent metal cation</name>
        <dbReference type="ChEBI" id="CHEBI:60240"/>
    </ligand>
</feature>
<feature type="binding site" evidence="1">
    <location>
        <position position="40"/>
    </location>
    <ligand>
        <name>a divalent metal cation</name>
        <dbReference type="ChEBI" id="CHEBI:60240"/>
    </ligand>
</feature>
<feature type="binding site" evidence="1">
    <location>
        <position position="98"/>
    </location>
    <ligand>
        <name>a divalent metal cation</name>
        <dbReference type="ChEBI" id="CHEBI:60240"/>
    </ligand>
</feature>
<gene>
    <name evidence="1" type="primary">surE</name>
    <name type="ordered locus">alr4846</name>
</gene>
<accession>Q8YMT3</accession>
<evidence type="ECO:0000255" key="1">
    <source>
        <dbReference type="HAMAP-Rule" id="MF_00060"/>
    </source>
</evidence>
<comment type="function">
    <text evidence="1">Nucleotidase that shows phosphatase activity on nucleoside 5'-monophosphates.</text>
</comment>
<comment type="catalytic activity">
    <reaction evidence="1">
        <text>a ribonucleoside 5'-phosphate + H2O = a ribonucleoside + phosphate</text>
        <dbReference type="Rhea" id="RHEA:12484"/>
        <dbReference type="ChEBI" id="CHEBI:15377"/>
        <dbReference type="ChEBI" id="CHEBI:18254"/>
        <dbReference type="ChEBI" id="CHEBI:43474"/>
        <dbReference type="ChEBI" id="CHEBI:58043"/>
        <dbReference type="EC" id="3.1.3.5"/>
    </reaction>
</comment>
<comment type="cofactor">
    <cofactor evidence="1">
        <name>a divalent metal cation</name>
        <dbReference type="ChEBI" id="CHEBI:60240"/>
    </cofactor>
    <text evidence="1">Binds 1 divalent metal cation per subunit.</text>
</comment>
<comment type="subcellular location">
    <subcellularLocation>
        <location evidence="1">Cytoplasm</location>
    </subcellularLocation>
</comment>
<comment type="similarity">
    <text evidence="1">Belongs to the SurE nucleotidase family.</text>
</comment>
<protein>
    <recommendedName>
        <fullName evidence="1">5'-nucleotidase SurE</fullName>
        <ecNumber evidence="1">3.1.3.5</ecNumber>
    </recommendedName>
    <alternativeName>
        <fullName evidence="1">Nucleoside 5'-monophosphate phosphohydrolase</fullName>
    </alternativeName>
</protein>
<sequence length="265" mass="28962">MKLLISNDDGISALGIRTLANALAEAGHDVTVVCPDRERSATGHGLTLHQPIRAEIVESIFHPAIKAWACDGTPSDCVKLALWALLESPPDLVLSGINQGANLGTEILYSGTVSAAMEGMIEGIPSIAFSLTSHISRNFQPAAKFATILVEQLAAKPIPDLMLLNVNIPPVEWEEIAGVKLTRQGVRRYVDVFDKRTDPRGKTYYWLTGEVLEEVEPPEGLNLPQNVPIDVHVVRNNYISITPLQYNLTYATGIDKLSDWDFPLS</sequence>
<name>SURE_NOSS1</name>
<organism>
    <name type="scientific">Nostoc sp. (strain PCC 7120 / SAG 25.82 / UTEX 2576)</name>
    <dbReference type="NCBI Taxonomy" id="103690"/>
    <lineage>
        <taxon>Bacteria</taxon>
        <taxon>Bacillati</taxon>
        <taxon>Cyanobacteriota</taxon>
        <taxon>Cyanophyceae</taxon>
        <taxon>Nostocales</taxon>
        <taxon>Nostocaceae</taxon>
        <taxon>Nostoc</taxon>
    </lineage>
</organism>
<reference key="1">
    <citation type="journal article" date="2001" name="DNA Res.">
        <title>Complete genomic sequence of the filamentous nitrogen-fixing cyanobacterium Anabaena sp. strain PCC 7120.</title>
        <authorList>
            <person name="Kaneko T."/>
            <person name="Nakamura Y."/>
            <person name="Wolk C.P."/>
            <person name="Kuritz T."/>
            <person name="Sasamoto S."/>
            <person name="Watanabe A."/>
            <person name="Iriguchi M."/>
            <person name="Ishikawa A."/>
            <person name="Kawashima K."/>
            <person name="Kimura T."/>
            <person name="Kishida Y."/>
            <person name="Kohara M."/>
            <person name="Matsumoto M."/>
            <person name="Matsuno A."/>
            <person name="Muraki A."/>
            <person name="Nakazaki N."/>
            <person name="Shimpo S."/>
            <person name="Sugimoto M."/>
            <person name="Takazawa M."/>
            <person name="Yamada M."/>
            <person name="Yasuda M."/>
            <person name="Tabata S."/>
        </authorList>
    </citation>
    <scope>NUCLEOTIDE SEQUENCE [LARGE SCALE GENOMIC DNA]</scope>
    <source>
        <strain>PCC 7120 / SAG 25.82 / UTEX 2576</strain>
    </source>
</reference>
<keyword id="KW-0963">Cytoplasm</keyword>
<keyword id="KW-0378">Hydrolase</keyword>
<keyword id="KW-0479">Metal-binding</keyword>
<keyword id="KW-0547">Nucleotide-binding</keyword>
<keyword id="KW-1185">Reference proteome</keyword>
<proteinExistence type="inferred from homology"/>